<name>PPIP2_HUMAN</name>
<gene>
    <name type="primary">PSTPIP2</name>
</gene>
<feature type="chain" id="PRO_0000058541" description="Proline-serine-threonine phosphatase-interacting protein 2">
    <location>
        <begin position="1"/>
        <end position="334"/>
    </location>
</feature>
<feature type="domain" description="F-BAR" evidence="4">
    <location>
        <begin position="4"/>
        <end position="264"/>
    </location>
</feature>
<feature type="region of interest" description="Disordered" evidence="5">
    <location>
        <begin position="295"/>
        <end position="322"/>
    </location>
</feature>
<feature type="coiled-coil region" evidence="3">
    <location>
        <begin position="66"/>
        <end position="166"/>
    </location>
</feature>
<feature type="modified residue" description="Phosphotyrosine" evidence="2">
    <location>
        <position position="323"/>
    </location>
</feature>
<feature type="modified residue" description="Phosphotyrosine" evidence="2">
    <location>
        <position position="329"/>
    </location>
</feature>
<feature type="splice variant" id="VSP_004070" description="In isoform 2." evidence="6">
    <original>MYEQVRKSLEMCSIQRDIEYFVNQRKTGQIPPAPIMYENFYSSQKNAVPAGKATGPNLARRGPLPIPKSSPDDPNYSLVDDYSLLYQ</original>
    <variation>HPSCMRISTPPRRMQSQQERLQGLTWQGEDPSQFLKAHQMIPITLWLMTTVCSISKINETRAFSG</variation>
    <location>
        <begin position="248"/>
        <end position="334"/>
    </location>
</feature>
<feature type="sequence variant" id="VAR_059708" description="In dbSNP:rs2276199.">
    <original>N</original>
    <variation>D</variation>
    <location>
        <position position="322"/>
    </location>
</feature>
<feature type="sequence variant" id="VAR_059709" description="In dbSNP:rs16978507.">
    <original>N</original>
    <variation>S</variation>
    <location>
        <position position="322"/>
    </location>
</feature>
<feature type="sequence conflict" description="In Ref. 3; BAB14404." evidence="7" ref="3">
    <original>Y</original>
    <variation>H</variation>
    <location>
        <position position="284"/>
    </location>
</feature>
<organism>
    <name type="scientific">Homo sapiens</name>
    <name type="common">Human</name>
    <dbReference type="NCBI Taxonomy" id="9606"/>
    <lineage>
        <taxon>Eukaryota</taxon>
        <taxon>Metazoa</taxon>
        <taxon>Chordata</taxon>
        <taxon>Craniata</taxon>
        <taxon>Vertebrata</taxon>
        <taxon>Euteleostomi</taxon>
        <taxon>Mammalia</taxon>
        <taxon>Eutheria</taxon>
        <taxon>Euarchontoglires</taxon>
        <taxon>Primates</taxon>
        <taxon>Haplorrhini</taxon>
        <taxon>Catarrhini</taxon>
        <taxon>Hominidae</taxon>
        <taxon>Homo</taxon>
    </lineage>
</organism>
<keyword id="KW-0025">Alternative splicing</keyword>
<keyword id="KW-0175">Coiled coil</keyword>
<keyword id="KW-0963">Cytoplasm</keyword>
<keyword id="KW-0472">Membrane</keyword>
<keyword id="KW-0597">Phosphoprotein</keyword>
<keyword id="KW-1267">Proteomics identification</keyword>
<keyword id="KW-1185">Reference proteome</keyword>
<accession>Q9H939</accession>
<reference key="1">
    <citation type="journal article" date="2005" name="Nature">
        <title>DNA sequence and analysis of human chromosome 18.</title>
        <authorList>
            <person name="Nusbaum C."/>
            <person name="Zody M.C."/>
            <person name="Borowsky M.L."/>
            <person name="Kamal M."/>
            <person name="Kodira C.D."/>
            <person name="Taylor T.D."/>
            <person name="Whittaker C.A."/>
            <person name="Chang J.L."/>
            <person name="Cuomo C.A."/>
            <person name="Dewar K."/>
            <person name="FitzGerald M.G."/>
            <person name="Yang X."/>
            <person name="Abouelleil A."/>
            <person name="Allen N.R."/>
            <person name="Anderson S."/>
            <person name="Bloom T."/>
            <person name="Bugalter B."/>
            <person name="Butler J."/>
            <person name="Cook A."/>
            <person name="DeCaprio D."/>
            <person name="Engels R."/>
            <person name="Garber M."/>
            <person name="Gnirke A."/>
            <person name="Hafez N."/>
            <person name="Hall J.L."/>
            <person name="Norman C.H."/>
            <person name="Itoh T."/>
            <person name="Jaffe D.B."/>
            <person name="Kuroki Y."/>
            <person name="Lehoczky J."/>
            <person name="Lui A."/>
            <person name="Macdonald P."/>
            <person name="Mauceli E."/>
            <person name="Mikkelsen T.S."/>
            <person name="Naylor J.W."/>
            <person name="Nicol R."/>
            <person name="Nguyen C."/>
            <person name="Noguchi H."/>
            <person name="O'Leary S.B."/>
            <person name="Piqani B."/>
            <person name="Smith C.L."/>
            <person name="Talamas J.A."/>
            <person name="Topham K."/>
            <person name="Totoki Y."/>
            <person name="Toyoda A."/>
            <person name="Wain H.M."/>
            <person name="Young S.K."/>
            <person name="Zeng Q."/>
            <person name="Zimmer A.R."/>
            <person name="Fujiyama A."/>
            <person name="Hattori M."/>
            <person name="Birren B.W."/>
            <person name="Sakaki Y."/>
            <person name="Lander E.S."/>
        </authorList>
    </citation>
    <scope>NUCLEOTIDE SEQUENCE [LARGE SCALE GENOMIC DNA]</scope>
</reference>
<reference key="2">
    <citation type="journal article" date="2004" name="Genome Res.">
        <title>The status, quality, and expansion of the NIH full-length cDNA project: the Mammalian Gene Collection (MGC).</title>
        <authorList>
            <consortium name="The MGC Project Team"/>
        </authorList>
    </citation>
    <scope>NUCLEOTIDE SEQUENCE [LARGE SCALE MRNA] (ISOFORM 2)</scope>
    <source>
        <tissue>Testis</tissue>
    </source>
</reference>
<reference key="3">
    <citation type="journal article" date="2004" name="Nat. Genet.">
        <title>Complete sequencing and characterization of 21,243 full-length human cDNAs.</title>
        <authorList>
            <person name="Ota T."/>
            <person name="Suzuki Y."/>
            <person name="Nishikawa T."/>
            <person name="Otsuki T."/>
            <person name="Sugiyama T."/>
            <person name="Irie R."/>
            <person name="Wakamatsu A."/>
            <person name="Hayashi K."/>
            <person name="Sato H."/>
            <person name="Nagai K."/>
            <person name="Kimura K."/>
            <person name="Makita H."/>
            <person name="Sekine M."/>
            <person name="Obayashi M."/>
            <person name="Nishi T."/>
            <person name="Shibahara T."/>
            <person name="Tanaka T."/>
            <person name="Ishii S."/>
            <person name="Yamamoto J."/>
            <person name="Saito K."/>
            <person name="Kawai Y."/>
            <person name="Isono Y."/>
            <person name="Nakamura Y."/>
            <person name="Nagahari K."/>
            <person name="Murakami K."/>
            <person name="Yasuda T."/>
            <person name="Iwayanagi T."/>
            <person name="Wagatsuma M."/>
            <person name="Shiratori A."/>
            <person name="Sudo H."/>
            <person name="Hosoiri T."/>
            <person name="Kaku Y."/>
            <person name="Kodaira H."/>
            <person name="Kondo H."/>
            <person name="Sugawara M."/>
            <person name="Takahashi M."/>
            <person name="Kanda K."/>
            <person name="Yokoi T."/>
            <person name="Furuya T."/>
            <person name="Kikkawa E."/>
            <person name="Omura Y."/>
            <person name="Abe K."/>
            <person name="Kamihara K."/>
            <person name="Katsuta N."/>
            <person name="Sato K."/>
            <person name="Tanikawa M."/>
            <person name="Yamazaki M."/>
            <person name="Ninomiya K."/>
            <person name="Ishibashi T."/>
            <person name="Yamashita H."/>
            <person name="Murakawa K."/>
            <person name="Fujimori K."/>
            <person name="Tanai H."/>
            <person name="Kimata M."/>
            <person name="Watanabe M."/>
            <person name="Hiraoka S."/>
            <person name="Chiba Y."/>
            <person name="Ishida S."/>
            <person name="Ono Y."/>
            <person name="Takiguchi S."/>
            <person name="Watanabe S."/>
            <person name="Yosida M."/>
            <person name="Hotuta T."/>
            <person name="Kusano J."/>
            <person name="Kanehori K."/>
            <person name="Takahashi-Fujii A."/>
            <person name="Hara H."/>
            <person name="Tanase T.-O."/>
            <person name="Nomura Y."/>
            <person name="Togiya S."/>
            <person name="Komai F."/>
            <person name="Hara R."/>
            <person name="Takeuchi K."/>
            <person name="Arita M."/>
            <person name="Imose N."/>
            <person name="Musashino K."/>
            <person name="Yuuki H."/>
            <person name="Oshima A."/>
            <person name="Sasaki N."/>
            <person name="Aotsuka S."/>
            <person name="Yoshikawa Y."/>
            <person name="Matsunawa H."/>
            <person name="Ichihara T."/>
            <person name="Shiohata N."/>
            <person name="Sano S."/>
            <person name="Moriya S."/>
            <person name="Momiyama H."/>
            <person name="Satoh N."/>
            <person name="Takami S."/>
            <person name="Terashima Y."/>
            <person name="Suzuki O."/>
            <person name="Nakagawa S."/>
            <person name="Senoh A."/>
            <person name="Mizoguchi H."/>
            <person name="Goto Y."/>
            <person name="Shimizu F."/>
            <person name="Wakebe H."/>
            <person name="Hishigaki H."/>
            <person name="Watanabe T."/>
            <person name="Sugiyama A."/>
            <person name="Takemoto M."/>
            <person name="Kawakami B."/>
            <person name="Yamazaki M."/>
            <person name="Watanabe K."/>
            <person name="Kumagai A."/>
            <person name="Itakura S."/>
            <person name="Fukuzumi Y."/>
            <person name="Fujimori Y."/>
            <person name="Komiyama M."/>
            <person name="Tashiro H."/>
            <person name="Tanigami A."/>
            <person name="Fujiwara T."/>
            <person name="Ono T."/>
            <person name="Yamada K."/>
            <person name="Fujii Y."/>
            <person name="Ozaki K."/>
            <person name="Hirao M."/>
            <person name="Ohmori Y."/>
            <person name="Kawabata A."/>
            <person name="Hikiji T."/>
            <person name="Kobatake N."/>
            <person name="Inagaki H."/>
            <person name="Ikema Y."/>
            <person name="Okamoto S."/>
            <person name="Okitani R."/>
            <person name="Kawakami T."/>
            <person name="Noguchi S."/>
            <person name="Itoh T."/>
            <person name="Shigeta K."/>
            <person name="Senba T."/>
            <person name="Matsumura K."/>
            <person name="Nakajima Y."/>
            <person name="Mizuno T."/>
            <person name="Morinaga M."/>
            <person name="Sasaki M."/>
            <person name="Togashi T."/>
            <person name="Oyama M."/>
            <person name="Hata H."/>
            <person name="Watanabe M."/>
            <person name="Komatsu T."/>
            <person name="Mizushima-Sugano J."/>
            <person name="Satoh T."/>
            <person name="Shirai Y."/>
            <person name="Takahashi Y."/>
            <person name="Nakagawa K."/>
            <person name="Okumura K."/>
            <person name="Nagase T."/>
            <person name="Nomura N."/>
            <person name="Kikuchi H."/>
            <person name="Masuho Y."/>
            <person name="Yamashita R."/>
            <person name="Nakai K."/>
            <person name="Yada T."/>
            <person name="Nakamura Y."/>
            <person name="Ohara O."/>
            <person name="Isogai T."/>
            <person name="Sugano S."/>
        </authorList>
    </citation>
    <scope>NUCLEOTIDE SEQUENCE [LARGE SCALE MRNA] OF 113-334 (ISOFORM 1)</scope>
</reference>
<reference key="4">
    <citation type="journal article" date="2011" name="BMC Syst. Biol.">
        <title>Initial characterization of the human central proteome.</title>
        <authorList>
            <person name="Burkard T.R."/>
            <person name="Planyavsky M."/>
            <person name="Kaupe I."/>
            <person name="Breitwieser F.P."/>
            <person name="Buerckstuemmer T."/>
            <person name="Bennett K.L."/>
            <person name="Superti-Furga G."/>
            <person name="Colinge J."/>
        </authorList>
    </citation>
    <scope>IDENTIFICATION BY MASS SPECTROMETRY [LARGE SCALE ANALYSIS]</scope>
</reference>
<comment type="function">
    <text evidence="1">Binds to F-actin. May be involved in regulation of the actin cytoskeleton (By similarity).</text>
</comment>
<comment type="subcellular location">
    <subcellularLocation>
        <location evidence="1">Cytoplasm</location>
    </subcellularLocation>
    <subcellularLocation>
        <location evidence="1">Membrane</location>
        <topology evidence="1">Peripheral membrane protein</topology>
    </subcellularLocation>
</comment>
<comment type="alternative products">
    <event type="alternative splicing"/>
    <isoform>
        <id>Q9H939-1</id>
        <name>1</name>
        <sequence type="displayed"/>
    </isoform>
    <isoform>
        <id>Q9H939-2</id>
        <name>2</name>
        <sequence type="described" ref="VSP_004070"/>
    </isoform>
</comment>
<comment type="PTM">
    <text evidence="1">Phosphorylated on tyrosine.</text>
</comment>
<comment type="sequence caution" evidence="7">
    <conflict type="erroneous initiation">
        <sequence resource="EMBL-CDS" id="BAB14404"/>
    </conflict>
    <text>Truncated N-terminus.</text>
</comment>
<sequence>MTRSLFKGNFWSADILSTIGYDNIIQHLNNGRKNCKEFEDFLKERAAIEERYGKDLLNLSRKKPCGQSEINTLKRALEVFKQQVDNVAQCHIQLAQSLREEARKMEEFREKQKLQRKKTELIMDAIHKQKSLQFKKTMDAKKNYEQKCRDKDEAEQAVSRSANLVNPKQQEKLFVKLATSKTAVEDSDKAYMLHIGTLDKVREEWQSEHIKACEAFEAQECERINFFRNALWLHVNQLSQQCVTSDEMYEQVRKSLEMCSIQRDIEYFVNQRKTGQIPPAPIMYENFYSSQKNAVPAGKATGPNLARRGPLPIPKSSPDDPNYSLVDDYSLLYQ</sequence>
<evidence type="ECO:0000250" key="1"/>
<evidence type="ECO:0000250" key="2">
    <source>
        <dbReference type="UniProtKB" id="Q99M15"/>
    </source>
</evidence>
<evidence type="ECO:0000255" key="3"/>
<evidence type="ECO:0000255" key="4">
    <source>
        <dbReference type="PROSITE-ProRule" id="PRU01077"/>
    </source>
</evidence>
<evidence type="ECO:0000256" key="5">
    <source>
        <dbReference type="SAM" id="MobiDB-lite"/>
    </source>
</evidence>
<evidence type="ECO:0000303" key="6">
    <source>
    </source>
</evidence>
<evidence type="ECO:0000305" key="7"/>
<dbReference type="EMBL" id="AC012569">
    <property type="status" value="NOT_ANNOTATED_CDS"/>
    <property type="molecule type" value="Genomic_DNA"/>
</dbReference>
<dbReference type="EMBL" id="AC090355">
    <property type="status" value="NOT_ANNOTATED_CDS"/>
    <property type="molecule type" value="Genomic_DNA"/>
</dbReference>
<dbReference type="EMBL" id="BC035395">
    <property type="protein sequence ID" value="AAH35395.1"/>
    <property type="molecule type" value="mRNA"/>
</dbReference>
<dbReference type="EMBL" id="AK023100">
    <property type="protein sequence ID" value="BAB14404.1"/>
    <property type="status" value="ALT_INIT"/>
    <property type="molecule type" value="mRNA"/>
</dbReference>
<dbReference type="CCDS" id="CCDS32820.2">
    <molecule id="Q9H939-1"/>
</dbReference>
<dbReference type="RefSeq" id="NP_077748.3">
    <molecule id="Q9H939-1"/>
    <property type="nucleotide sequence ID" value="NM_024430.3"/>
</dbReference>
<dbReference type="SMR" id="Q9H939"/>
<dbReference type="BioGRID" id="114512">
    <property type="interactions" value="29"/>
</dbReference>
<dbReference type="FunCoup" id="Q9H939">
    <property type="interactions" value="141"/>
</dbReference>
<dbReference type="IntAct" id="Q9H939">
    <property type="interactions" value="20"/>
</dbReference>
<dbReference type="MINT" id="Q9H939"/>
<dbReference type="STRING" id="9606.ENSP00000387261"/>
<dbReference type="GlyGen" id="Q9H939">
    <property type="glycosylation" value="1 site, 1 O-linked glycan (1 site)"/>
</dbReference>
<dbReference type="iPTMnet" id="Q9H939"/>
<dbReference type="PhosphoSitePlus" id="Q9H939"/>
<dbReference type="BioMuta" id="PSTPIP2"/>
<dbReference type="DMDM" id="294862539"/>
<dbReference type="jPOST" id="Q9H939"/>
<dbReference type="MassIVE" id="Q9H939"/>
<dbReference type="PaxDb" id="9606-ENSP00000387261"/>
<dbReference type="PeptideAtlas" id="Q9H939"/>
<dbReference type="ProteomicsDB" id="81278">
    <molecule id="Q9H939-1"/>
</dbReference>
<dbReference type="ProteomicsDB" id="81279">
    <molecule id="Q9H939-2"/>
</dbReference>
<dbReference type="Pumba" id="Q9H939"/>
<dbReference type="Antibodypedia" id="22437">
    <property type="antibodies" value="87 antibodies from 21 providers"/>
</dbReference>
<dbReference type="DNASU" id="9050"/>
<dbReference type="Ensembl" id="ENST00000409746.5">
    <molecule id="Q9H939-1"/>
    <property type="protein sequence ID" value="ENSP00000387261.4"/>
    <property type="gene ID" value="ENSG00000152229.18"/>
</dbReference>
<dbReference type="Ensembl" id="ENST00000589328.5">
    <molecule id="Q9H939-2"/>
    <property type="protein sequence ID" value="ENSP00000468622.1"/>
    <property type="gene ID" value="ENSG00000152229.18"/>
</dbReference>
<dbReference type="GeneID" id="9050"/>
<dbReference type="KEGG" id="hsa:9050"/>
<dbReference type="MANE-Select" id="ENST00000409746.5">
    <property type="protein sequence ID" value="ENSP00000387261.4"/>
    <property type="RefSeq nucleotide sequence ID" value="NM_024430.4"/>
    <property type="RefSeq protein sequence ID" value="NP_077748.3"/>
</dbReference>
<dbReference type="UCSC" id="uc002lbp.5">
    <molecule id="Q9H939-1"/>
    <property type="organism name" value="human"/>
</dbReference>
<dbReference type="AGR" id="HGNC:9581"/>
<dbReference type="CTD" id="9050"/>
<dbReference type="DisGeNET" id="9050"/>
<dbReference type="GeneCards" id="PSTPIP2"/>
<dbReference type="HGNC" id="HGNC:9581">
    <property type="gene designation" value="PSTPIP2"/>
</dbReference>
<dbReference type="HPA" id="ENSG00000152229">
    <property type="expression patterns" value="Group enriched (bone marrow, lymphoid tissue, skeletal muscle)"/>
</dbReference>
<dbReference type="MIM" id="616046">
    <property type="type" value="gene"/>
</dbReference>
<dbReference type="neXtProt" id="NX_Q9H939"/>
<dbReference type="OpenTargets" id="ENSG00000152229"/>
<dbReference type="PharmGKB" id="PA33932"/>
<dbReference type="VEuPathDB" id="HostDB:ENSG00000152229"/>
<dbReference type="eggNOG" id="KOG2398">
    <property type="taxonomic scope" value="Eukaryota"/>
</dbReference>
<dbReference type="GeneTree" id="ENSGT00940000158788"/>
<dbReference type="HOGENOM" id="CLU_038196_1_1_1"/>
<dbReference type="InParanoid" id="Q9H939"/>
<dbReference type="OMA" id="EEADQNM"/>
<dbReference type="OrthoDB" id="10255964at2759"/>
<dbReference type="PAN-GO" id="Q9H939">
    <property type="GO annotations" value="5 GO annotations based on evolutionary models"/>
</dbReference>
<dbReference type="PhylomeDB" id="Q9H939"/>
<dbReference type="TreeFam" id="TF313677"/>
<dbReference type="PathwayCommons" id="Q9H939"/>
<dbReference type="SignaLink" id="Q9H939"/>
<dbReference type="BioGRID-ORCS" id="9050">
    <property type="hits" value="6 hits in 1159 CRISPR screens"/>
</dbReference>
<dbReference type="ChiTaRS" id="PSTPIP2">
    <property type="organism name" value="human"/>
</dbReference>
<dbReference type="GeneWiki" id="PSTPIP2"/>
<dbReference type="GenomeRNAi" id="9050"/>
<dbReference type="Pharos" id="Q9H939">
    <property type="development level" value="Tbio"/>
</dbReference>
<dbReference type="PRO" id="PR:Q9H939"/>
<dbReference type="Proteomes" id="UP000005640">
    <property type="component" value="Chromosome 18"/>
</dbReference>
<dbReference type="RNAct" id="Q9H939">
    <property type="molecule type" value="protein"/>
</dbReference>
<dbReference type="Bgee" id="ENSG00000152229">
    <property type="expression patterns" value="Expressed in spleen and 127 other cell types or tissues"/>
</dbReference>
<dbReference type="ExpressionAtlas" id="Q9H939">
    <property type="expression patterns" value="baseline and differential"/>
</dbReference>
<dbReference type="GO" id="GO:0005737">
    <property type="term" value="C:cytoplasm"/>
    <property type="evidence" value="ECO:0000318"/>
    <property type="project" value="GO_Central"/>
</dbReference>
<dbReference type="GO" id="GO:0005856">
    <property type="term" value="C:cytoskeleton"/>
    <property type="evidence" value="ECO:0007669"/>
    <property type="project" value="Ensembl"/>
</dbReference>
<dbReference type="GO" id="GO:0005829">
    <property type="term" value="C:cytosol"/>
    <property type="evidence" value="ECO:0007669"/>
    <property type="project" value="Ensembl"/>
</dbReference>
<dbReference type="GO" id="GO:0016020">
    <property type="term" value="C:membrane"/>
    <property type="evidence" value="ECO:0007669"/>
    <property type="project" value="UniProtKB-SubCell"/>
</dbReference>
<dbReference type="CDD" id="cd07672">
    <property type="entry name" value="F-BAR_PSTPIP2"/>
    <property type="match status" value="1"/>
</dbReference>
<dbReference type="FunFam" id="1.20.1270.60:FF:000054">
    <property type="entry name" value="Proline-serine-threonine phosphatase interacting protein 2"/>
    <property type="match status" value="1"/>
</dbReference>
<dbReference type="Gene3D" id="1.20.1270.60">
    <property type="entry name" value="Arfaptin homology (AH) domain/BAR domain"/>
    <property type="match status" value="1"/>
</dbReference>
<dbReference type="InterPro" id="IPR027267">
    <property type="entry name" value="AH/BAR_dom_sf"/>
</dbReference>
<dbReference type="InterPro" id="IPR031160">
    <property type="entry name" value="F_BAR"/>
</dbReference>
<dbReference type="InterPro" id="IPR001060">
    <property type="entry name" value="FCH_dom"/>
</dbReference>
<dbReference type="InterPro" id="IPR042694">
    <property type="entry name" value="PSTPIP2_F-BAR"/>
</dbReference>
<dbReference type="PANTHER" id="PTHR23065">
    <property type="entry name" value="PROLINE-SERINE-THREONINE PHOSPHATASE INTERACTING PROTEIN 1"/>
    <property type="match status" value="1"/>
</dbReference>
<dbReference type="PANTHER" id="PTHR23065:SF9">
    <property type="entry name" value="PROLINE-SERINE-THREONINE PHOSPHATASE-INTERACTING PROTEIN 2"/>
    <property type="match status" value="1"/>
</dbReference>
<dbReference type="Pfam" id="PF00611">
    <property type="entry name" value="FCH"/>
    <property type="match status" value="1"/>
</dbReference>
<dbReference type="SMART" id="SM00055">
    <property type="entry name" value="FCH"/>
    <property type="match status" value="1"/>
</dbReference>
<dbReference type="SUPFAM" id="SSF103657">
    <property type="entry name" value="BAR/IMD domain-like"/>
    <property type="match status" value="1"/>
</dbReference>
<dbReference type="PROSITE" id="PS51741">
    <property type="entry name" value="F_BAR"/>
    <property type="match status" value="1"/>
</dbReference>
<proteinExistence type="evidence at protein level"/>
<protein>
    <recommendedName>
        <fullName>Proline-serine-threonine phosphatase-interacting protein 2</fullName>
        <shortName>PEST phosphatase-interacting protein 2</shortName>
    </recommendedName>
</protein>